<organism>
    <name type="scientific">Oryza sativa subsp. indica</name>
    <name type="common">Rice</name>
    <dbReference type="NCBI Taxonomy" id="39946"/>
    <lineage>
        <taxon>Eukaryota</taxon>
        <taxon>Viridiplantae</taxon>
        <taxon>Streptophyta</taxon>
        <taxon>Embryophyta</taxon>
        <taxon>Tracheophyta</taxon>
        <taxon>Spermatophyta</taxon>
        <taxon>Magnoliopsida</taxon>
        <taxon>Liliopsida</taxon>
        <taxon>Poales</taxon>
        <taxon>Poaceae</taxon>
        <taxon>BOP clade</taxon>
        <taxon>Oryzoideae</taxon>
        <taxon>Oryzeae</taxon>
        <taxon>Oryzinae</taxon>
        <taxon>Oryza</taxon>
        <taxon>Oryza sativa</taxon>
    </lineage>
</organism>
<name>UP12_ORYSI</name>
<accession>P83643</accession>
<accession>A2YST8</accession>
<accession>B8BC84</accession>
<proteinExistence type="evidence at protein level"/>
<feature type="transit peptide" description="Chloroplast" evidence="1">
    <location>
        <begin position="1"/>
        <end position="56"/>
    </location>
</feature>
<feature type="chain" id="PRO_0000280231" description="ACT domain-containing protein DS12, chloroplastic">
    <location>
        <begin position="57"/>
        <end position="283"/>
    </location>
</feature>
<feature type="domain" description="ACT 1" evidence="2">
    <location>
        <begin position="91"/>
        <end position="171"/>
    </location>
</feature>
<feature type="domain" description="ACT 2" evidence="2">
    <location>
        <begin position="206"/>
        <end position="276"/>
    </location>
</feature>
<feature type="region of interest" description="Disordered" evidence="3">
    <location>
        <begin position="14"/>
        <end position="78"/>
    </location>
</feature>
<feature type="compositionally biased region" description="Low complexity" evidence="3">
    <location>
        <begin position="48"/>
        <end position="63"/>
    </location>
</feature>
<sequence length="283" mass="30323">MAEMAVTAALRPCSGVSPAVSGTSHRRRRPAAWRALAPPPPHAGLRLSSPAVRVPRAASSAAVEDGSSSNTDTVPTPKVIIDQDSDPDATIVEITLGDRLGDLLDTMNALKNLGLNVVKASVCLDSTGKHIKLAITKLSTGRKIGEPELLEAVRLTIINNMIQYHPEASSQLALGATFGPEPPTELVDVDIATHIDIYDDGPDRSLLVVETADRPGLLVDLVKIIDDINITVQSGEFDTEGLLAKAKFHVSYRGKPLIKALQQVLANSLRYFLRRPTTEEGSY</sequence>
<protein>
    <recommendedName>
        <fullName evidence="5">ACT domain-containing protein DS12, chloroplastic</fullName>
    </recommendedName>
    <alternativeName>
        <fullName>Uncharacterized protein DS12 from 2D-PAGE of leaf</fullName>
    </alternativeName>
</protein>
<reference key="1">
    <citation type="journal article" date="2005" name="PLoS Biol.">
        <title>The genomes of Oryza sativa: a history of duplications.</title>
        <authorList>
            <person name="Yu J."/>
            <person name="Wang J."/>
            <person name="Lin W."/>
            <person name="Li S."/>
            <person name="Li H."/>
            <person name="Zhou J."/>
            <person name="Ni P."/>
            <person name="Dong W."/>
            <person name="Hu S."/>
            <person name="Zeng C."/>
            <person name="Zhang J."/>
            <person name="Zhang Y."/>
            <person name="Li R."/>
            <person name="Xu Z."/>
            <person name="Li S."/>
            <person name="Li X."/>
            <person name="Zheng H."/>
            <person name="Cong L."/>
            <person name="Lin L."/>
            <person name="Yin J."/>
            <person name="Geng J."/>
            <person name="Li G."/>
            <person name="Shi J."/>
            <person name="Liu J."/>
            <person name="Lv H."/>
            <person name="Li J."/>
            <person name="Wang J."/>
            <person name="Deng Y."/>
            <person name="Ran L."/>
            <person name="Shi X."/>
            <person name="Wang X."/>
            <person name="Wu Q."/>
            <person name="Li C."/>
            <person name="Ren X."/>
            <person name="Wang J."/>
            <person name="Wang X."/>
            <person name="Li D."/>
            <person name="Liu D."/>
            <person name="Zhang X."/>
            <person name="Ji Z."/>
            <person name="Zhao W."/>
            <person name="Sun Y."/>
            <person name="Zhang Z."/>
            <person name="Bao J."/>
            <person name="Han Y."/>
            <person name="Dong L."/>
            <person name="Ji J."/>
            <person name="Chen P."/>
            <person name="Wu S."/>
            <person name="Liu J."/>
            <person name="Xiao Y."/>
            <person name="Bu D."/>
            <person name="Tan J."/>
            <person name="Yang L."/>
            <person name="Ye C."/>
            <person name="Zhang J."/>
            <person name="Xu J."/>
            <person name="Zhou Y."/>
            <person name="Yu Y."/>
            <person name="Zhang B."/>
            <person name="Zhuang S."/>
            <person name="Wei H."/>
            <person name="Liu B."/>
            <person name="Lei M."/>
            <person name="Yu H."/>
            <person name="Li Y."/>
            <person name="Xu H."/>
            <person name="Wei S."/>
            <person name="He X."/>
            <person name="Fang L."/>
            <person name="Zhang Z."/>
            <person name="Zhang Y."/>
            <person name="Huang X."/>
            <person name="Su Z."/>
            <person name="Tong W."/>
            <person name="Li J."/>
            <person name="Tong Z."/>
            <person name="Li S."/>
            <person name="Ye J."/>
            <person name="Wang L."/>
            <person name="Fang L."/>
            <person name="Lei T."/>
            <person name="Chen C.-S."/>
            <person name="Chen H.-C."/>
            <person name="Xu Z."/>
            <person name="Li H."/>
            <person name="Huang H."/>
            <person name="Zhang F."/>
            <person name="Xu H."/>
            <person name="Li N."/>
            <person name="Zhao C."/>
            <person name="Li S."/>
            <person name="Dong L."/>
            <person name="Huang Y."/>
            <person name="Li L."/>
            <person name="Xi Y."/>
            <person name="Qi Q."/>
            <person name="Li W."/>
            <person name="Zhang B."/>
            <person name="Hu W."/>
            <person name="Zhang Y."/>
            <person name="Tian X."/>
            <person name="Jiao Y."/>
            <person name="Liang X."/>
            <person name="Jin J."/>
            <person name="Gao L."/>
            <person name="Zheng W."/>
            <person name="Hao B."/>
            <person name="Liu S.-M."/>
            <person name="Wang W."/>
            <person name="Yuan L."/>
            <person name="Cao M."/>
            <person name="McDermott J."/>
            <person name="Samudrala R."/>
            <person name="Wang J."/>
            <person name="Wong G.K.-S."/>
            <person name="Yang H."/>
        </authorList>
    </citation>
    <scope>NUCLEOTIDE SEQUENCE [LARGE SCALE GENOMIC DNA]</scope>
    <source>
        <strain>cv. 93-11</strain>
    </source>
</reference>
<reference key="2">
    <citation type="journal article" date="2007" name="Plant Mol. Biol.">
        <title>A collection of 10,096 indica rice full-length cDNAs reveals highly expressed sequence divergence between Oryza sativa indica and japonica subspecies.</title>
        <authorList>
            <person name="Liu X."/>
            <person name="Lu T."/>
            <person name="Yu S."/>
            <person name="Li Y."/>
            <person name="Huang Y."/>
            <person name="Huang T."/>
            <person name="Zhang L."/>
            <person name="Zhu J."/>
            <person name="Zhao Q."/>
            <person name="Fan D."/>
            <person name="Mu J."/>
            <person name="Shangguan Y."/>
            <person name="Feng Q."/>
            <person name="Guan J."/>
            <person name="Ying K."/>
            <person name="Zhang Y."/>
            <person name="Lin Z."/>
            <person name="Sun Z."/>
            <person name="Qian Q."/>
            <person name="Lu Y."/>
            <person name="Han B."/>
        </authorList>
    </citation>
    <scope>NUCLEOTIDE SEQUENCE [LARGE SCALE MRNA]</scope>
    <source>
        <strain>cv. Guang-Lu-Ai No.4</strain>
    </source>
</reference>
<reference evidence="5" key="3">
    <citation type="journal article" date="2002" name="Proteomics">
        <title>Proteomic analysis of rice leaves during drought stress and recovery.</title>
        <authorList>
            <person name="Salekdeh G.H."/>
            <person name="Siopongco J."/>
            <person name="Wade L.J."/>
            <person name="Ghareyazie B."/>
            <person name="Bennett J."/>
        </authorList>
    </citation>
    <scope>PROTEIN SEQUENCE OF 207-215 AND 234-245</scope>
    <scope>INDUCTION</scope>
    <source>
        <strain>cv. IR62266-42-6-2</strain>
        <tissue evidence="4">Leaf</tissue>
    </source>
</reference>
<dbReference type="EMBL" id="CM000133">
    <property type="protein sequence ID" value="EEC83162.1"/>
    <property type="status" value="ALT_INIT"/>
    <property type="molecule type" value="Genomic_DNA"/>
</dbReference>
<dbReference type="EMBL" id="CT858998">
    <property type="status" value="NOT_ANNOTATED_CDS"/>
    <property type="molecule type" value="mRNA"/>
</dbReference>
<dbReference type="STRING" id="39946.P83643"/>
<dbReference type="EnsemblPlants" id="OsGoSa_08g0007770.02">
    <property type="protein sequence ID" value="OsGoSa_08g0007770.02"/>
    <property type="gene ID" value="OsGoSa_08g0007770"/>
</dbReference>
<dbReference type="EnsemblPlants" id="OsIR64_08g0008230.02">
    <property type="protein sequence ID" value="OsIR64_08g0008230.02"/>
    <property type="gene ID" value="OsIR64_08g0008230"/>
</dbReference>
<dbReference type="EnsemblPlants" id="OsKYG_08g0007950.01">
    <property type="protein sequence ID" value="OsKYG_08g0007950.01"/>
    <property type="gene ID" value="OsKYG_08g0007950"/>
</dbReference>
<dbReference type="EnsemblPlants" id="OsLaMu_08g0007940.01">
    <property type="protein sequence ID" value="OsLaMu_08g0007940.01"/>
    <property type="gene ID" value="OsLaMu_08g0007940"/>
</dbReference>
<dbReference type="EnsemblPlants" id="OsLima_08g0007860.01">
    <property type="protein sequence ID" value="OsLima_08g0007860.01"/>
    <property type="gene ID" value="OsLima_08g0007860"/>
</dbReference>
<dbReference type="EnsemblPlants" id="OsLiXu_08g0008470.01">
    <property type="protein sequence ID" value="OsLiXu_08g0008470.01"/>
    <property type="gene ID" value="OsLiXu_08g0008470"/>
</dbReference>
<dbReference type="EnsemblPlants" id="OsLiXu_Ung0042880.01">
    <property type="protein sequence ID" value="OsLiXu_Ung0042880.01"/>
    <property type="gene ID" value="OsLiXu_Ung0042880"/>
</dbReference>
<dbReference type="EnsemblPlants" id="OsMH63_08G008480_01">
    <property type="protein sequence ID" value="OsMH63_08G008480_01"/>
    <property type="gene ID" value="OsMH63_08G008480"/>
</dbReference>
<dbReference type="EnsemblPlants" id="OsPr106_08g0008240.01">
    <property type="protein sequence ID" value="OsPr106_08g0008240.01"/>
    <property type="gene ID" value="OsPr106_08g0008240"/>
</dbReference>
<dbReference type="EnsemblPlants" id="OsZS97_08G008040_01">
    <property type="protein sequence ID" value="OsZS97_08G008040_01"/>
    <property type="gene ID" value="OsZS97_08G008040"/>
</dbReference>
<dbReference type="Gramene" id="OsGoSa_08g0007770.02">
    <property type="protein sequence ID" value="OsGoSa_08g0007770.02"/>
    <property type="gene ID" value="OsGoSa_08g0007770"/>
</dbReference>
<dbReference type="Gramene" id="OsIR64_08g0008230.02">
    <property type="protein sequence ID" value="OsIR64_08g0008230.02"/>
    <property type="gene ID" value="OsIR64_08g0008230"/>
</dbReference>
<dbReference type="Gramene" id="OsKYG_08g0007950.01">
    <property type="protein sequence ID" value="OsKYG_08g0007950.01"/>
    <property type="gene ID" value="OsKYG_08g0007950"/>
</dbReference>
<dbReference type="Gramene" id="OsLaMu_08g0007940.01">
    <property type="protein sequence ID" value="OsLaMu_08g0007940.01"/>
    <property type="gene ID" value="OsLaMu_08g0007940"/>
</dbReference>
<dbReference type="Gramene" id="OsLima_08g0007860.01">
    <property type="protein sequence ID" value="OsLima_08g0007860.01"/>
    <property type="gene ID" value="OsLima_08g0007860"/>
</dbReference>
<dbReference type="Gramene" id="OsLiXu_08g0008470.01">
    <property type="protein sequence ID" value="OsLiXu_08g0008470.01"/>
    <property type="gene ID" value="OsLiXu_08g0008470"/>
</dbReference>
<dbReference type="Gramene" id="OsLiXu_Ung0042880.01">
    <property type="protein sequence ID" value="OsLiXu_Ung0042880.01"/>
    <property type="gene ID" value="OsLiXu_Ung0042880"/>
</dbReference>
<dbReference type="Gramene" id="OsMH63_08G008480_01">
    <property type="protein sequence ID" value="OsMH63_08G008480_01"/>
    <property type="gene ID" value="OsMH63_08G008480"/>
</dbReference>
<dbReference type="Gramene" id="OsPr106_08g0008240.01">
    <property type="protein sequence ID" value="OsPr106_08g0008240.01"/>
    <property type="gene ID" value="OsPr106_08g0008240"/>
</dbReference>
<dbReference type="Gramene" id="OsZS97_08G008040_01">
    <property type="protein sequence ID" value="OsZS97_08G008040_01"/>
    <property type="gene ID" value="OsZS97_08G008040"/>
</dbReference>
<dbReference type="HOGENOM" id="CLU_066532_1_0_1"/>
<dbReference type="OrthoDB" id="496180at2759"/>
<dbReference type="Proteomes" id="UP000007015">
    <property type="component" value="Chromosome 8"/>
</dbReference>
<dbReference type="GO" id="GO:0009570">
    <property type="term" value="C:chloroplast stroma"/>
    <property type="evidence" value="ECO:0007669"/>
    <property type="project" value="TreeGrafter"/>
</dbReference>
<dbReference type="GO" id="GO:0009535">
    <property type="term" value="C:chloroplast thylakoid membrane"/>
    <property type="evidence" value="ECO:0007669"/>
    <property type="project" value="TreeGrafter"/>
</dbReference>
<dbReference type="CDD" id="cd04873">
    <property type="entry name" value="ACT_UUR-ACR-like"/>
    <property type="match status" value="1"/>
</dbReference>
<dbReference type="InterPro" id="IPR040217">
    <property type="entry name" value="ACR1-12"/>
</dbReference>
<dbReference type="InterPro" id="IPR045865">
    <property type="entry name" value="ACT-like_dom_sf"/>
</dbReference>
<dbReference type="PANTHER" id="PTHR31096:SF16">
    <property type="entry name" value="ACT DOMAIN-CONTAINING PROTEIN ACR11"/>
    <property type="match status" value="1"/>
</dbReference>
<dbReference type="PANTHER" id="PTHR31096">
    <property type="entry name" value="ACT DOMAIN-CONTAINING PROTEIN ACR4-RELATED"/>
    <property type="match status" value="1"/>
</dbReference>
<dbReference type="SUPFAM" id="SSF55021">
    <property type="entry name" value="ACT-like"/>
    <property type="match status" value="1"/>
</dbReference>
<gene>
    <name type="ORF">OsI_027381</name>
    <name evidence="6" type="ORF">OsI_28383</name>
</gene>
<evidence type="ECO:0000255" key="1"/>
<evidence type="ECO:0000255" key="2">
    <source>
        <dbReference type="PROSITE-ProRule" id="PRU01007"/>
    </source>
</evidence>
<evidence type="ECO:0000256" key="3">
    <source>
        <dbReference type="SAM" id="MobiDB-lite"/>
    </source>
</evidence>
<evidence type="ECO:0000269" key="4">
    <source>
    </source>
</evidence>
<evidence type="ECO:0000305" key="5"/>
<evidence type="ECO:0000312" key="6">
    <source>
        <dbReference type="EMBL" id="EEC83162.1"/>
    </source>
</evidence>
<comment type="subcellular location">
    <subcellularLocation>
        <location evidence="5">Plastid</location>
        <location evidence="5">Chloroplast</location>
    </subcellularLocation>
</comment>
<comment type="induction">
    <text evidence="4">Repressed by drought stress.</text>
</comment>
<comment type="miscellaneous">
    <text evidence="4">On the 2D-gel the determined pI of this unknown protein is: 4.7, its MW is: 36 kDa.</text>
</comment>
<comment type="sequence caution" evidence="5">
    <conflict type="erroneous initiation">
        <sequence resource="EMBL-CDS" id="EEC83162"/>
    </conflict>
    <text>Truncated N-terminus.</text>
</comment>
<keyword id="KW-0150">Chloroplast</keyword>
<keyword id="KW-0903">Direct protein sequencing</keyword>
<keyword id="KW-0934">Plastid</keyword>
<keyword id="KW-1185">Reference proteome</keyword>
<keyword id="KW-0677">Repeat</keyword>
<keyword id="KW-0809">Transit peptide</keyword>